<sequence length="96" mass="11050">MAKMMQREITKTTVNVAKMVMVDGEVQVEQLPSETFVGNLSMEQAQWRMKRKYKGEPVQVVSVEPNTEVYELPVEKFLEVATVRVEKEDSEEQVAE</sequence>
<proteinExistence type="inferred from homology"/>
<evidence type="ECO:0000250" key="1">
    <source>
        <dbReference type="UniProtKB" id="P03685"/>
    </source>
</evidence>
<evidence type="ECO:0000305" key="2"/>
<organism>
    <name type="scientific">Bacillus phage PZA</name>
    <name type="common">Bacteriophage PZA</name>
    <dbReference type="NCBI Taxonomy" id="10757"/>
    <lineage>
        <taxon>Viruses</taxon>
        <taxon>Duplodnaviria</taxon>
        <taxon>Heunggongvirae</taxon>
        <taxon>Uroviricota</taxon>
        <taxon>Caudoviricetes</taxon>
        <taxon>Salasmaviridae</taxon>
        <taxon>Picovirinae</taxon>
        <taxon>Salasvirus</taxon>
        <taxon>Salasvirus PZA</taxon>
    </lineage>
</organism>
<accession>P06955</accession>
<protein>
    <recommendedName>
        <fullName evidence="1">Histone-like protein p6</fullName>
    </recommendedName>
    <alternativeName>
        <fullName evidence="1">Double-stranded DNA-binding protein</fullName>
    </alternativeName>
    <alternativeName>
        <fullName evidence="1">Double-stranded DNA-binding protein p6</fullName>
    </alternativeName>
    <alternativeName>
        <fullName evidence="1">Gene product 6</fullName>
        <shortName evidence="1">gp6</shortName>
    </alternativeName>
    <alternativeName>
        <fullName evidence="1">Histone-like binding protein</fullName>
    </alternativeName>
    <alternativeName>
        <fullName evidence="1">Nucleoid-associated protein p6</fullName>
    </alternativeName>
    <alternativeName>
        <fullName evidence="1">Protein p6</fullName>
    </alternativeName>
</protein>
<name>NP_BPPZA</name>
<comment type="function">
    <text evidence="1">Histone-like nucleoprotein that binds to the viral dsDNA and responsible for wrapping and compacting the viral DNA about 4-fold. Forms a nucleoprotein complex in which the DNA adopts a right-handed toroidal conformation winding around a protein core. Binds ito most, if not all, the viral genome, although with different affinity, the highest one corresponding to the genome ends. The formation of the nucleoprotein complex at the genome ends, activates the initiation of viral DNA replication. The binding of p6 would recruit the complex formed by the TP and the DNA polymerase to the origin. Protein p6 also represses early transcription from promoter C2, and, together with protein p4, represses transcription from promoters A2b and A2c and activates late transcription from promoter A3. Protein p6 is therefore involved in the early to late transcription switch. The formation of the nucleoprotein complex at the right end of the phage genome where the early promoter C2 is located affects local topology, which may contribute to the promoter repression.</text>
</comment>
<comment type="subunit">
    <text evidence="1">Homodimer. Homomultimer. Binds to double-stranded DNA giving rise to multimeric nucleoprotein complexes. Binding specificity for the viral DNA is based on supercoiling, the viral genome having a negative superhelicity lower than that of plasmid DNA. Interacts with the DNA replication protein p17; this interaction optimizes the binding of protein p6 at the viral DNA ends, thus favoring the initiation of replication.</text>
</comment>
<comment type="domain">
    <text evidence="1">The N-terminus is involved in DNA-binding.</text>
</comment>
<comment type="similarity">
    <text evidence="2">Belongs to the phi29likevirus histone-like protein p6 family.</text>
</comment>
<dbReference type="EMBL" id="M11813">
    <property type="protein sequence ID" value="AAA88473.1"/>
    <property type="molecule type" value="Genomic_DNA"/>
</dbReference>
<dbReference type="PIR" id="I24528">
    <property type="entry name" value="ERBP6Z"/>
</dbReference>
<dbReference type="SMR" id="P06955"/>
<dbReference type="Proteomes" id="UP000000855">
    <property type="component" value="Segment"/>
</dbReference>
<dbReference type="GO" id="GO:0003677">
    <property type="term" value="F:DNA binding"/>
    <property type="evidence" value="ECO:0007669"/>
    <property type="project" value="UniProtKB-KW"/>
</dbReference>
<dbReference type="GO" id="GO:0030261">
    <property type="term" value="P:chromosome condensation"/>
    <property type="evidence" value="ECO:0007669"/>
    <property type="project" value="UniProtKB-KW"/>
</dbReference>
<dbReference type="GO" id="GO:0006260">
    <property type="term" value="P:DNA replication"/>
    <property type="evidence" value="ECO:0007669"/>
    <property type="project" value="UniProtKB-KW"/>
</dbReference>
<dbReference type="GO" id="GO:0039693">
    <property type="term" value="P:viral DNA genome replication"/>
    <property type="evidence" value="ECO:0007669"/>
    <property type="project" value="UniProtKB-KW"/>
</dbReference>
<dbReference type="InterPro" id="IPR035188">
    <property type="entry name" value="Histone-like_p6"/>
</dbReference>
<dbReference type="Pfam" id="PF17548">
    <property type="entry name" value="p6"/>
    <property type="match status" value="1"/>
</dbReference>
<gene>
    <name type="primary">6</name>
</gene>
<keyword id="KW-0226">DNA condensation</keyword>
<keyword id="KW-0235">DNA replication</keyword>
<keyword id="KW-0238">DNA-binding</keyword>
<keyword id="KW-0244">Early protein</keyword>
<keyword id="KW-0678">Repressor</keyword>
<keyword id="KW-0804">Transcription</keyword>
<keyword id="KW-0805">Transcription regulation</keyword>
<keyword id="KW-1194">Viral DNA replication</keyword>
<reference key="1">
    <citation type="journal article" date="1985" name="Gene">
        <title>Nucleotide sequence of the major early region of Bacillus subtilis phage PZA, a close relative of phi 29.</title>
        <authorList>
            <person name="Paces V."/>
            <person name="Vlcek C."/>
            <person name="Urbanek P."/>
            <person name="Hostomsky Z."/>
        </authorList>
    </citation>
    <scope>NUCLEOTIDE SEQUENCE [GENOMIC DNA]</scope>
</reference>
<feature type="chain" id="PRO_0000106569" description="Histone-like protein p6">
    <location>
        <begin position="1"/>
        <end position="96"/>
    </location>
</feature>
<feature type="DNA-binding region" evidence="1">
    <location>
        <begin position="1"/>
        <end position="19"/>
    </location>
</feature>
<organismHost>
    <name type="scientific">Bacillus subtilis</name>
    <dbReference type="NCBI Taxonomy" id="1423"/>
</organismHost>